<name>ADD1_CAEEL</name>
<protein>
    <recommendedName>
        <fullName>Adducin-related protein 1</fullName>
    </recommendedName>
</protein>
<accession>Q9U9K0</accession>
<accession>O44581</accession>
<accession>Q95X64</accession>
<accession>Q9U9J9</accession>
<gene>
    <name evidence="7" type="primary">add-1</name>
    <name evidence="7" type="ORF">F39C12.2</name>
</gene>
<comment type="function">
    <text evidence="1 3">Membrane-cytoskeleton-associated protein that promotes the assembly of the spectrin-actin network. Plays a role in time-dependent memmory loss and the retention of conditioned behavior over time (PubMed:24630719).</text>
</comment>
<comment type="subcellular location">
    <subcellularLocation>
        <location evidence="1">Cytoplasm</location>
        <location evidence="1">Cytoskeleton</location>
    </subcellularLocation>
    <subcellularLocation>
        <location evidence="1">Cell membrane</location>
        <topology evidence="1">Peripheral membrane protein</topology>
        <orientation evidence="1">Cytoplasmic side</orientation>
    </subcellularLocation>
</comment>
<comment type="alternative products">
    <event type="alternative splicing"/>
    <isoform>
        <id>Q9U9K0-1</id>
        <name evidence="7">b</name>
        <sequence type="displayed"/>
    </isoform>
    <isoform>
        <id>Q9U9K0-2</id>
        <name evidence="6">a</name>
        <sequence type="described" ref="VSP_000194 VSP_000196"/>
    </isoform>
    <isoform>
        <id>Q9U9K0-3</id>
        <name evidence="8">c</name>
        <sequence type="described" ref="VSP_000195"/>
    </isoform>
    <isoform>
        <id>Q9U9K0-4</id>
        <name evidence="9">d</name>
        <sequence type="described" ref="VSP_000193"/>
    </isoform>
</comment>
<comment type="similarity">
    <text evidence="5">Belongs to the aldolase class II family. Adducin subfamily.</text>
</comment>
<organism>
    <name type="scientific">Caenorhabditis elegans</name>
    <dbReference type="NCBI Taxonomy" id="6239"/>
    <lineage>
        <taxon>Eukaryota</taxon>
        <taxon>Metazoa</taxon>
        <taxon>Ecdysozoa</taxon>
        <taxon>Nematoda</taxon>
        <taxon>Chromadorea</taxon>
        <taxon>Rhabditida</taxon>
        <taxon>Rhabditina</taxon>
        <taxon>Rhabditomorpha</taxon>
        <taxon>Rhabditoidea</taxon>
        <taxon>Rhabditidae</taxon>
        <taxon>Peloderinae</taxon>
        <taxon>Caenorhabditis</taxon>
    </lineage>
</organism>
<keyword id="KW-0009">Actin-binding</keyword>
<keyword id="KW-0025">Alternative splicing</keyword>
<keyword id="KW-1003">Cell membrane</keyword>
<keyword id="KW-0963">Cytoplasm</keyword>
<keyword id="KW-0206">Cytoskeleton</keyword>
<keyword id="KW-0472">Membrane</keyword>
<keyword id="KW-1185">Reference proteome</keyword>
<reference key="1">
    <citation type="submission" date="1999-07" db="EMBL/GenBank/DDBJ databases">
        <title>Molecular and functional analysis of the spectrin based membrane skeleton in Caenorhabditis elegans.</title>
        <authorList>
            <person name="Moorthy S."/>
            <person name="Bennett V."/>
        </authorList>
    </citation>
    <scope>NUCLEOTIDE SEQUENCE [MRNA] (ISOFORMS A AND B)</scope>
</reference>
<reference key="2">
    <citation type="journal article" date="1998" name="Science">
        <title>Genome sequence of the nematode C. elegans: a platform for investigating biology.</title>
        <authorList>
            <consortium name="The C. elegans sequencing consortium"/>
        </authorList>
    </citation>
    <scope>NUCLEOTIDE SEQUENCE [LARGE SCALE GENOMIC DNA]</scope>
    <source>
        <strain>Bristol N2</strain>
    </source>
</reference>
<reference key="3">
    <citation type="journal article" date="2014" name="Cell">
        <title>Forgetting is regulated via Musashi-mediated translational control of the Arp2/3 complex.</title>
        <authorList>
            <person name="Hadziselimovic N."/>
            <person name="Vukojevic V."/>
            <person name="Peter F."/>
            <person name="Milnik A."/>
            <person name="Fastenrath M."/>
            <person name="Fenyves B.G."/>
            <person name="Hieber P."/>
            <person name="Demougin P."/>
            <person name="Vogler C."/>
            <person name="de Quervain D.J."/>
            <person name="Papassotiropoulos A."/>
            <person name="Stetak A."/>
        </authorList>
    </citation>
    <scope>FUNCTION</scope>
</reference>
<feature type="chain" id="PRO_0000218540" description="Adducin-related protein 1">
    <location>
        <begin position="1"/>
        <end position="732"/>
    </location>
</feature>
<feature type="region of interest" description="Disordered" evidence="2">
    <location>
        <begin position="1"/>
        <end position="22"/>
    </location>
</feature>
<feature type="region of interest" description="Disordered" evidence="2">
    <location>
        <begin position="684"/>
        <end position="732"/>
    </location>
</feature>
<feature type="compositionally biased region" description="Polar residues" evidence="2">
    <location>
        <begin position="685"/>
        <end position="705"/>
    </location>
</feature>
<feature type="compositionally biased region" description="Basic residues" evidence="2">
    <location>
        <begin position="716"/>
        <end position="732"/>
    </location>
</feature>
<feature type="splice variant" id="VSP_000193" description="In isoform d." evidence="5">
    <location>
        <begin position="645"/>
        <end position="694"/>
    </location>
</feature>
<feature type="splice variant" id="VSP_000194" description="In isoform a." evidence="4">
    <original>CDHPSPMSISTEYPE</original>
    <variation>YPDILRPIYRQETYV</variation>
    <location>
        <begin position="665"/>
        <end position="679"/>
    </location>
</feature>
<feature type="splice variant" id="VSP_000195" description="In isoform c." evidence="5">
    <location>
        <begin position="666"/>
        <end position="695"/>
    </location>
</feature>
<feature type="splice variant" id="VSP_000196" description="In isoform a." evidence="4">
    <location>
        <begin position="680"/>
        <end position="732"/>
    </location>
</feature>
<feature type="sequence conflict" description="In Ref. 1; AAD49856/AAD49857." evidence="5" ref="1">
    <original>P</original>
    <variation>S</variation>
    <location>
        <position position="377"/>
    </location>
</feature>
<dbReference type="EMBL" id="AF166167">
    <property type="protein sequence ID" value="AAD49856.1"/>
    <property type="molecule type" value="mRNA"/>
</dbReference>
<dbReference type="EMBL" id="AF166168">
    <property type="protein sequence ID" value="AAD49857.1"/>
    <property type="molecule type" value="mRNA"/>
</dbReference>
<dbReference type="EMBL" id="BX284606">
    <property type="protein sequence ID" value="CCD70842.1"/>
    <property type="molecule type" value="Genomic_DNA"/>
</dbReference>
<dbReference type="EMBL" id="BX284606">
    <property type="protein sequence ID" value="CCD70843.1"/>
    <property type="molecule type" value="Genomic_DNA"/>
</dbReference>
<dbReference type="EMBL" id="BX284606">
    <property type="protein sequence ID" value="CCD70844.1"/>
    <property type="molecule type" value="Genomic_DNA"/>
</dbReference>
<dbReference type="EMBL" id="BX284606">
    <property type="protein sequence ID" value="CCD70845.1"/>
    <property type="molecule type" value="Genomic_DNA"/>
</dbReference>
<dbReference type="RefSeq" id="NP_001024639.1">
    <molecule id="Q9U9K0-2"/>
    <property type="nucleotide sequence ID" value="NM_001029468.5"/>
</dbReference>
<dbReference type="RefSeq" id="NP_001024640.1">
    <molecule id="Q9U9K0-1"/>
    <property type="nucleotide sequence ID" value="NM_001029469.5"/>
</dbReference>
<dbReference type="RefSeq" id="NP_001024641.1">
    <molecule id="Q9U9K0-3"/>
    <property type="nucleotide sequence ID" value="NM_001029470.4"/>
</dbReference>
<dbReference type="RefSeq" id="NP_001024642.1">
    <molecule id="Q9U9K0-4"/>
    <property type="nucleotide sequence ID" value="NM_001029471.2"/>
</dbReference>
<dbReference type="SMR" id="Q9U9K0"/>
<dbReference type="BioGRID" id="45695">
    <property type="interactions" value="9"/>
</dbReference>
<dbReference type="FunCoup" id="Q9U9K0">
    <property type="interactions" value="1380"/>
</dbReference>
<dbReference type="IntAct" id="Q9U9K0">
    <property type="interactions" value="3"/>
</dbReference>
<dbReference type="MINT" id="Q9U9K0"/>
<dbReference type="STRING" id="6239.F39C12.2b.1"/>
<dbReference type="iPTMnet" id="Q9U9K0"/>
<dbReference type="PaxDb" id="6239-F39C12.2b"/>
<dbReference type="EnsemblMetazoa" id="F39C12.2a.1">
    <molecule id="Q9U9K0-2"/>
    <property type="protein sequence ID" value="F39C12.2a.1"/>
    <property type="gene ID" value="WBGene00000072"/>
</dbReference>
<dbReference type="EnsemblMetazoa" id="F39C12.2b.1">
    <molecule id="Q9U9K0-1"/>
    <property type="protein sequence ID" value="F39C12.2b.1"/>
    <property type="gene ID" value="WBGene00000072"/>
</dbReference>
<dbReference type="EnsemblMetazoa" id="F39C12.2c.1">
    <molecule id="Q9U9K0-3"/>
    <property type="protein sequence ID" value="F39C12.2c.1"/>
    <property type="gene ID" value="WBGene00000072"/>
</dbReference>
<dbReference type="EnsemblMetazoa" id="F39C12.2d.1">
    <molecule id="Q9U9K0-4"/>
    <property type="protein sequence ID" value="F39C12.2d.1"/>
    <property type="gene ID" value="WBGene00000072"/>
</dbReference>
<dbReference type="GeneID" id="180760"/>
<dbReference type="KEGG" id="cel:CELE_F39C12.2"/>
<dbReference type="UCSC" id="F39C12.2b">
    <molecule id="Q9U9K0-1"/>
    <property type="organism name" value="c. elegans"/>
</dbReference>
<dbReference type="AGR" id="WB:WBGene00000072"/>
<dbReference type="CTD" id="180760"/>
<dbReference type="WormBase" id="F39C12.2a">
    <molecule id="Q9U9K0-2"/>
    <property type="protein sequence ID" value="CE28308"/>
    <property type="gene ID" value="WBGene00000072"/>
    <property type="gene designation" value="add-1"/>
</dbReference>
<dbReference type="WormBase" id="F39C12.2b">
    <molecule id="Q9U9K0-1"/>
    <property type="protein sequence ID" value="CE28309"/>
    <property type="gene ID" value="WBGene00000072"/>
    <property type="gene designation" value="add-1"/>
</dbReference>
<dbReference type="WormBase" id="F39C12.2c">
    <molecule id="Q9U9K0-3"/>
    <property type="protein sequence ID" value="CE29794"/>
    <property type="gene ID" value="WBGene00000072"/>
    <property type="gene designation" value="add-1"/>
</dbReference>
<dbReference type="WormBase" id="F39C12.2d">
    <molecule id="Q9U9K0-4"/>
    <property type="protein sequence ID" value="CE30979"/>
    <property type="gene ID" value="WBGene00000072"/>
    <property type="gene designation" value="add-1"/>
</dbReference>
<dbReference type="eggNOG" id="KOG3699">
    <property type="taxonomic scope" value="Eukaryota"/>
</dbReference>
<dbReference type="InParanoid" id="Q9U9K0"/>
<dbReference type="OMA" id="LEWESWM"/>
<dbReference type="OrthoDB" id="3238794at2759"/>
<dbReference type="PhylomeDB" id="Q9U9K0"/>
<dbReference type="Reactome" id="R-CEL-264870">
    <property type="pathway name" value="Caspase-mediated cleavage of cytoskeletal proteins"/>
</dbReference>
<dbReference type="Reactome" id="R-CEL-5223345">
    <property type="pathway name" value="Miscellaneous transport and binding events"/>
</dbReference>
<dbReference type="Reactome" id="R-CEL-9013405">
    <property type="pathway name" value="RHOD GTPase cycle"/>
</dbReference>
<dbReference type="Reactome" id="R-CEL-9035034">
    <property type="pathway name" value="RHOF GTPase cycle"/>
</dbReference>
<dbReference type="PRO" id="PR:Q9U9K0"/>
<dbReference type="Proteomes" id="UP000001940">
    <property type="component" value="Chromosome X"/>
</dbReference>
<dbReference type="Bgee" id="WBGene00000072">
    <property type="expression patterns" value="Expressed in larva and 3 other cell types or tissues"/>
</dbReference>
<dbReference type="ExpressionAtlas" id="Q9U9K0">
    <property type="expression patterns" value="baseline and differential"/>
</dbReference>
<dbReference type="GO" id="GO:0005737">
    <property type="term" value="C:cytoplasm"/>
    <property type="evidence" value="ECO:0007669"/>
    <property type="project" value="UniProtKB-KW"/>
</dbReference>
<dbReference type="GO" id="GO:0005856">
    <property type="term" value="C:cytoskeleton"/>
    <property type="evidence" value="ECO:0000318"/>
    <property type="project" value="GO_Central"/>
</dbReference>
<dbReference type="GO" id="GO:0005886">
    <property type="term" value="C:plasma membrane"/>
    <property type="evidence" value="ECO:0000318"/>
    <property type="project" value="GO_Central"/>
</dbReference>
<dbReference type="GO" id="GO:0014069">
    <property type="term" value="C:postsynaptic density"/>
    <property type="evidence" value="ECO:0000314"/>
    <property type="project" value="WormBase"/>
</dbReference>
<dbReference type="GO" id="GO:0051015">
    <property type="term" value="F:actin filament binding"/>
    <property type="evidence" value="ECO:0000250"/>
    <property type="project" value="WormBase"/>
</dbReference>
<dbReference type="GO" id="GO:0061572">
    <property type="term" value="P:actin filament bundle organization"/>
    <property type="evidence" value="ECO:0000315"/>
    <property type="project" value="WormBase"/>
</dbReference>
<dbReference type="GO" id="GO:0051016">
    <property type="term" value="P:barbed-end actin filament capping"/>
    <property type="evidence" value="ECO:0000250"/>
    <property type="project" value="WormBase"/>
</dbReference>
<dbReference type="GO" id="GO:0007616">
    <property type="term" value="P:long-term memory"/>
    <property type="evidence" value="ECO:0000315"/>
    <property type="project" value="WormBase"/>
</dbReference>
<dbReference type="GO" id="GO:0007613">
    <property type="term" value="P:memory"/>
    <property type="evidence" value="ECO:0000315"/>
    <property type="project" value="WormBase"/>
</dbReference>
<dbReference type="GO" id="GO:0097120">
    <property type="term" value="P:receptor localization to synapse"/>
    <property type="evidence" value="ECO:0000315"/>
    <property type="project" value="WormBase"/>
</dbReference>
<dbReference type="GO" id="GO:0007614">
    <property type="term" value="P:short-term memory"/>
    <property type="evidence" value="ECO:0000315"/>
    <property type="project" value="WormBase"/>
</dbReference>
<dbReference type="FunFam" id="3.40.225.10:FF:000013">
    <property type="entry name" value="Class II aldolase"/>
    <property type="match status" value="1"/>
</dbReference>
<dbReference type="Gene3D" id="3.40.225.10">
    <property type="entry name" value="Class II aldolase/adducin N-terminal domain"/>
    <property type="match status" value="1"/>
</dbReference>
<dbReference type="InterPro" id="IPR051017">
    <property type="entry name" value="Aldolase-II_Adducin_sf"/>
</dbReference>
<dbReference type="InterPro" id="IPR001303">
    <property type="entry name" value="Aldolase_II/adducin_N"/>
</dbReference>
<dbReference type="InterPro" id="IPR036409">
    <property type="entry name" value="Aldolase_II/adducin_N_sf"/>
</dbReference>
<dbReference type="PANTHER" id="PTHR10672">
    <property type="entry name" value="ADDUCIN"/>
    <property type="match status" value="1"/>
</dbReference>
<dbReference type="PANTHER" id="PTHR10672:SF3">
    <property type="entry name" value="PROTEIN HU-LI TAI SHAO"/>
    <property type="match status" value="1"/>
</dbReference>
<dbReference type="Pfam" id="PF00596">
    <property type="entry name" value="Aldolase_II"/>
    <property type="match status" value="1"/>
</dbReference>
<dbReference type="SMART" id="SM01007">
    <property type="entry name" value="Aldolase_II"/>
    <property type="match status" value="1"/>
</dbReference>
<dbReference type="SUPFAM" id="SSF53639">
    <property type="entry name" value="AraD/HMP-PK domain-like"/>
    <property type="match status" value="1"/>
</dbReference>
<proteinExistence type="evidence at transcript level"/>
<sequence length="732" mass="82170">MIGRKEKERERPYYRDPDDPEYIKDLQRPAVIKEDLSEMERRKRVQQILESKSFCHELEEVIRQECDTARTDPDHLQVLQKLSDLTVPQGNMSFGNLHTYGGNTIAIADLRGNEKYSKAERIQRNKLACLFRLADLFQWSQGIHNEISYRTNDEDNTFLMNPFGLLYHEITAATIVKIDENGKILDCGTLKAGVNQPAFLLHSAIYKAHPMVRCILHMHTAIVAAVASMKCGLLPLCKEAMVLGPVGYHDYQDIGDDDIQFDEIIANLGDKNVLFLRNQGFLVVGDTIEHATFLANNTVIACETQVRAARAGLDNLIIPEEKAIQRAFRNSRNTNSLKRNGTVDWRVGELEWESWMRVLDHANFQTGHVYRQPQLRPKSAMSTSMVNNNDVAVPPTTSAYGQIDETNLESVSAHRLALLRKEQERVRWMNSPNAYQKVEFLEYGADNPKKITKWVHDVNVPSASGTPVKISSVHQFSPASSNPKEFKEKQKAIKENNRLGTLSAGPQSQILDSVTYEDIALLIKPDNDGTVGQSSTADRAILIGTASKGIIDRQFQHHAQVYHQIYAPNPFSVETDADIKKYVDMVKAKNSQSAPVSARSGYSQYDEVEADTVSLMQGVREHKLSQAALSASDDGLNAGISPNNVRTSEESVNTSYMSQSVVFDCDHPSPMSISTEYPEKVKMTRFSSTQGTSEGNTTSRSCTTASEEEKPTKDEKKKKKKGFLSFMRKKDK</sequence>
<evidence type="ECO:0000250" key="1"/>
<evidence type="ECO:0000256" key="2">
    <source>
        <dbReference type="SAM" id="MobiDB-lite"/>
    </source>
</evidence>
<evidence type="ECO:0000269" key="3">
    <source>
    </source>
</evidence>
<evidence type="ECO:0000303" key="4">
    <source ref="1"/>
</evidence>
<evidence type="ECO:0000305" key="5"/>
<evidence type="ECO:0000312" key="6">
    <source>
        <dbReference type="WormBase" id="F39C12.2a"/>
    </source>
</evidence>
<evidence type="ECO:0000312" key="7">
    <source>
        <dbReference type="WormBase" id="F39C12.2b"/>
    </source>
</evidence>
<evidence type="ECO:0000312" key="8">
    <source>
        <dbReference type="WormBase" id="F39C12.2c"/>
    </source>
</evidence>
<evidence type="ECO:0000312" key="9">
    <source>
        <dbReference type="WormBase" id="F39C12.2d"/>
    </source>
</evidence>